<gene>
    <name evidence="1" type="primary">tmk</name>
    <name type="ordered locus">VC0395_A1602</name>
    <name type="ordered locus">VC395_2131</name>
</gene>
<keyword id="KW-0067">ATP-binding</keyword>
<keyword id="KW-0418">Kinase</keyword>
<keyword id="KW-0545">Nucleotide biosynthesis</keyword>
<keyword id="KW-0547">Nucleotide-binding</keyword>
<keyword id="KW-0808">Transferase</keyword>
<protein>
    <recommendedName>
        <fullName evidence="1">Thymidylate kinase</fullName>
        <ecNumber evidence="1">2.7.4.9</ecNumber>
    </recommendedName>
    <alternativeName>
        <fullName evidence="1">dTMP kinase</fullName>
    </alternativeName>
</protein>
<comment type="function">
    <text evidence="1">Phosphorylation of dTMP to form dTDP in both de novo and salvage pathways of dTTP synthesis.</text>
</comment>
<comment type="catalytic activity">
    <reaction evidence="1">
        <text>dTMP + ATP = dTDP + ADP</text>
        <dbReference type="Rhea" id="RHEA:13517"/>
        <dbReference type="ChEBI" id="CHEBI:30616"/>
        <dbReference type="ChEBI" id="CHEBI:58369"/>
        <dbReference type="ChEBI" id="CHEBI:63528"/>
        <dbReference type="ChEBI" id="CHEBI:456216"/>
        <dbReference type="EC" id="2.7.4.9"/>
    </reaction>
</comment>
<comment type="similarity">
    <text evidence="1">Belongs to the thymidylate kinase family.</text>
</comment>
<accession>A5F6P9</accession>
<accession>C3M268</accession>
<feature type="chain" id="PRO_1000071564" description="Thymidylate kinase">
    <location>
        <begin position="1"/>
        <end position="212"/>
    </location>
</feature>
<feature type="binding site" evidence="1">
    <location>
        <begin position="10"/>
        <end position="17"/>
    </location>
    <ligand>
        <name>ATP</name>
        <dbReference type="ChEBI" id="CHEBI:30616"/>
    </ligand>
</feature>
<organism>
    <name type="scientific">Vibrio cholerae serotype O1 (strain ATCC 39541 / Classical Ogawa 395 / O395)</name>
    <dbReference type="NCBI Taxonomy" id="345073"/>
    <lineage>
        <taxon>Bacteria</taxon>
        <taxon>Pseudomonadati</taxon>
        <taxon>Pseudomonadota</taxon>
        <taxon>Gammaproteobacteria</taxon>
        <taxon>Vibrionales</taxon>
        <taxon>Vibrionaceae</taxon>
        <taxon>Vibrio</taxon>
    </lineage>
</organism>
<dbReference type="EC" id="2.7.4.9" evidence="1"/>
<dbReference type="EMBL" id="CP000627">
    <property type="protein sequence ID" value="ABQ20039.1"/>
    <property type="molecule type" value="Genomic_DNA"/>
</dbReference>
<dbReference type="EMBL" id="CP001235">
    <property type="protein sequence ID" value="ACP10123.1"/>
    <property type="molecule type" value="Genomic_DNA"/>
</dbReference>
<dbReference type="RefSeq" id="WP_000991933.1">
    <property type="nucleotide sequence ID" value="NZ_JAACZH010000001.1"/>
</dbReference>
<dbReference type="SMR" id="A5F6P9"/>
<dbReference type="KEGG" id="vco:VC0395_A1602"/>
<dbReference type="KEGG" id="vcr:VC395_2131"/>
<dbReference type="PATRIC" id="fig|345073.21.peg.2059"/>
<dbReference type="eggNOG" id="COG0125">
    <property type="taxonomic scope" value="Bacteria"/>
</dbReference>
<dbReference type="HOGENOM" id="CLU_049131_0_1_6"/>
<dbReference type="OrthoDB" id="9774907at2"/>
<dbReference type="Proteomes" id="UP000000249">
    <property type="component" value="Chromosome 2"/>
</dbReference>
<dbReference type="GO" id="GO:0005829">
    <property type="term" value="C:cytosol"/>
    <property type="evidence" value="ECO:0007669"/>
    <property type="project" value="TreeGrafter"/>
</dbReference>
<dbReference type="GO" id="GO:0005524">
    <property type="term" value="F:ATP binding"/>
    <property type="evidence" value="ECO:0007669"/>
    <property type="project" value="UniProtKB-UniRule"/>
</dbReference>
<dbReference type="GO" id="GO:0004798">
    <property type="term" value="F:dTMP kinase activity"/>
    <property type="evidence" value="ECO:0007669"/>
    <property type="project" value="UniProtKB-UniRule"/>
</dbReference>
<dbReference type="GO" id="GO:0006233">
    <property type="term" value="P:dTDP biosynthetic process"/>
    <property type="evidence" value="ECO:0007669"/>
    <property type="project" value="InterPro"/>
</dbReference>
<dbReference type="GO" id="GO:0006235">
    <property type="term" value="P:dTTP biosynthetic process"/>
    <property type="evidence" value="ECO:0007669"/>
    <property type="project" value="UniProtKB-UniRule"/>
</dbReference>
<dbReference type="GO" id="GO:0006227">
    <property type="term" value="P:dUDP biosynthetic process"/>
    <property type="evidence" value="ECO:0007669"/>
    <property type="project" value="TreeGrafter"/>
</dbReference>
<dbReference type="CDD" id="cd01672">
    <property type="entry name" value="TMPK"/>
    <property type="match status" value="1"/>
</dbReference>
<dbReference type="FunFam" id="3.40.50.300:FF:000321">
    <property type="entry name" value="Thymidylate kinase"/>
    <property type="match status" value="1"/>
</dbReference>
<dbReference type="Gene3D" id="3.40.50.300">
    <property type="entry name" value="P-loop containing nucleotide triphosphate hydrolases"/>
    <property type="match status" value="1"/>
</dbReference>
<dbReference type="HAMAP" id="MF_00165">
    <property type="entry name" value="Thymidylate_kinase"/>
    <property type="match status" value="1"/>
</dbReference>
<dbReference type="InterPro" id="IPR027417">
    <property type="entry name" value="P-loop_NTPase"/>
</dbReference>
<dbReference type="InterPro" id="IPR039430">
    <property type="entry name" value="Thymidylate_kin-like_dom"/>
</dbReference>
<dbReference type="InterPro" id="IPR018095">
    <property type="entry name" value="Thymidylate_kin_CS"/>
</dbReference>
<dbReference type="InterPro" id="IPR018094">
    <property type="entry name" value="Thymidylate_kinase"/>
</dbReference>
<dbReference type="NCBIfam" id="TIGR00041">
    <property type="entry name" value="DTMP_kinase"/>
    <property type="match status" value="1"/>
</dbReference>
<dbReference type="PANTHER" id="PTHR10344">
    <property type="entry name" value="THYMIDYLATE KINASE"/>
    <property type="match status" value="1"/>
</dbReference>
<dbReference type="PANTHER" id="PTHR10344:SF4">
    <property type="entry name" value="UMP-CMP KINASE 2, MITOCHONDRIAL"/>
    <property type="match status" value="1"/>
</dbReference>
<dbReference type="Pfam" id="PF02223">
    <property type="entry name" value="Thymidylate_kin"/>
    <property type="match status" value="1"/>
</dbReference>
<dbReference type="SUPFAM" id="SSF52540">
    <property type="entry name" value="P-loop containing nucleoside triphosphate hydrolases"/>
    <property type="match status" value="1"/>
</dbReference>
<dbReference type="PROSITE" id="PS01331">
    <property type="entry name" value="THYMIDYLATE_KINASE"/>
    <property type="match status" value="1"/>
</dbReference>
<reference key="1">
    <citation type="submission" date="2007-03" db="EMBL/GenBank/DDBJ databases">
        <authorList>
            <person name="Heidelberg J."/>
        </authorList>
    </citation>
    <scope>NUCLEOTIDE SEQUENCE [LARGE SCALE GENOMIC DNA]</scope>
    <source>
        <strain>ATCC 39541 / Classical Ogawa 395 / O395</strain>
    </source>
</reference>
<reference key="2">
    <citation type="journal article" date="2008" name="PLoS ONE">
        <title>A recalibrated molecular clock and independent origins for the cholera pandemic clones.</title>
        <authorList>
            <person name="Feng L."/>
            <person name="Reeves P.R."/>
            <person name="Lan R."/>
            <person name="Ren Y."/>
            <person name="Gao C."/>
            <person name="Zhou Z."/>
            <person name="Ren Y."/>
            <person name="Cheng J."/>
            <person name="Wang W."/>
            <person name="Wang J."/>
            <person name="Qian W."/>
            <person name="Li D."/>
            <person name="Wang L."/>
        </authorList>
    </citation>
    <scope>NUCLEOTIDE SEQUENCE [LARGE SCALE GENOMIC DNA]</scope>
    <source>
        <strain>ATCC 39541 / Classical Ogawa 395 / O395</strain>
    </source>
</reference>
<evidence type="ECO:0000255" key="1">
    <source>
        <dbReference type="HAMAP-Rule" id="MF_00165"/>
    </source>
</evidence>
<name>KTHY_VIBC3</name>
<proteinExistence type="inferred from homology"/>
<sequence length="212" mass="23666">MNAKFIVIEGLEGAGKSTAIQVVVETLQQNGIDHITRTREPGGTLLAEKLRALVKEEHPGEELQDITELLLVYAARVQLVENVIKPALARGEWVVGDRHDMSSQAYQGGGRQIAPSTMQSLKQTALGDFKPDLTLYLDIDPKLGLERARGRGELDRIEKMDISFFERARERYLELANSDDSVVMIDAAQSIEQVTADIRRALQDWLSQVNRV</sequence>